<accession>Q91FQ1</accession>
<reference key="1">
    <citation type="journal article" date="2001" name="Virology">
        <title>Analysis of the first complete DNA sequence of an invertebrate iridovirus: coding strategy of the genome of Chilo iridescent virus.</title>
        <authorList>
            <person name="Jakob N.J."/>
            <person name="Mueller K."/>
            <person name="Bahr U."/>
            <person name="Darai G."/>
        </authorList>
    </citation>
    <scope>NUCLEOTIDE SEQUENCE [LARGE SCALE GENOMIC DNA]</scope>
</reference>
<reference key="2">
    <citation type="journal article" date="2007" name="Virol. J.">
        <title>Comparative genomic analysis of the family Iridoviridae: re-annotating and defining the core set of iridovirus genes.</title>
        <authorList>
            <person name="Eaton H.E."/>
            <person name="Metcalf J."/>
            <person name="Penny E."/>
            <person name="Tcherepanov V."/>
            <person name="Upton C."/>
            <person name="Brunetti C.R."/>
        </authorList>
    </citation>
    <scope>GENOME REANNOTATION</scope>
</reference>
<keyword id="KW-1185">Reference proteome</keyword>
<feature type="chain" id="PRO_0000377839" description="Uncharacterized protein 272L">
    <location>
        <begin position="1"/>
        <end position="71"/>
    </location>
</feature>
<sequence length="71" mass="8082">MFFTAILKSFKQAFIFKYKMTIFKSGHLVEALSSCPFSGHYDGFTKIYKGKKISTIKTPFIGSVILEYGNK</sequence>
<proteinExistence type="predicted"/>
<dbReference type="EMBL" id="AF303741">
    <property type="protein sequence ID" value="AAK82133.1"/>
    <property type="molecule type" value="Genomic_DNA"/>
</dbReference>
<dbReference type="RefSeq" id="NP_149735.1">
    <property type="nucleotide sequence ID" value="NC_003038.1"/>
</dbReference>
<dbReference type="KEGG" id="vg:1733117"/>
<dbReference type="Proteomes" id="UP000001359">
    <property type="component" value="Genome"/>
</dbReference>
<gene>
    <name type="ORF">IIV6-272L</name>
</gene>
<protein>
    <recommendedName>
        <fullName>Uncharacterized protein 272L</fullName>
    </recommendedName>
</protein>
<organismHost>
    <name type="scientific">Acheta domesticus</name>
    <name type="common">House cricket</name>
    <dbReference type="NCBI Taxonomy" id="6997"/>
</organismHost>
<organismHost>
    <name type="scientific">Chilo suppressalis</name>
    <name type="common">Asiatic rice borer moth</name>
    <dbReference type="NCBI Taxonomy" id="168631"/>
</organismHost>
<organismHost>
    <name type="scientific">Gryllus bimaculatus</name>
    <name type="common">Two-spotted cricket</name>
    <dbReference type="NCBI Taxonomy" id="6999"/>
</organismHost>
<organismHost>
    <name type="scientific">Gryllus campestris</name>
    <dbReference type="NCBI Taxonomy" id="58607"/>
</organismHost>
<organismHost>
    <name type="scientific">Spodoptera frugiperda</name>
    <name type="common">Fall armyworm</name>
    <dbReference type="NCBI Taxonomy" id="7108"/>
</organismHost>
<organism>
    <name type="scientific">Invertebrate iridescent virus 6</name>
    <name type="common">IIV-6</name>
    <name type="synonym">Chilo iridescent virus</name>
    <dbReference type="NCBI Taxonomy" id="176652"/>
    <lineage>
        <taxon>Viruses</taxon>
        <taxon>Varidnaviria</taxon>
        <taxon>Bamfordvirae</taxon>
        <taxon>Nucleocytoviricota</taxon>
        <taxon>Megaviricetes</taxon>
        <taxon>Pimascovirales</taxon>
        <taxon>Iridoviridae</taxon>
        <taxon>Betairidovirinae</taxon>
        <taxon>Iridovirus</taxon>
    </lineage>
</organism>
<name>272L_IIV6</name>